<proteinExistence type="inferred from homology"/>
<organism>
    <name type="scientific">Lacticaseibacillus casei (strain BL23)</name>
    <name type="common">Lactobacillus casei</name>
    <dbReference type="NCBI Taxonomy" id="543734"/>
    <lineage>
        <taxon>Bacteria</taxon>
        <taxon>Bacillati</taxon>
        <taxon>Bacillota</taxon>
        <taxon>Bacilli</taxon>
        <taxon>Lactobacillales</taxon>
        <taxon>Lactobacillaceae</taxon>
        <taxon>Lacticaseibacillus</taxon>
    </lineage>
</organism>
<dbReference type="EC" id="3.2.2.27" evidence="1"/>
<dbReference type="EMBL" id="FM177140">
    <property type="protein sequence ID" value="CAQ66246.1"/>
    <property type="molecule type" value="Genomic_DNA"/>
</dbReference>
<dbReference type="SMR" id="B3WCZ5"/>
<dbReference type="KEGG" id="lcb:LCABL_11610"/>
<dbReference type="HOGENOM" id="CLU_032162_3_0_9"/>
<dbReference type="GO" id="GO:0005737">
    <property type="term" value="C:cytoplasm"/>
    <property type="evidence" value="ECO:0007669"/>
    <property type="project" value="UniProtKB-SubCell"/>
</dbReference>
<dbReference type="GO" id="GO:0004844">
    <property type="term" value="F:uracil DNA N-glycosylase activity"/>
    <property type="evidence" value="ECO:0007669"/>
    <property type="project" value="UniProtKB-UniRule"/>
</dbReference>
<dbReference type="GO" id="GO:0097510">
    <property type="term" value="P:base-excision repair, AP site formation via deaminated base removal"/>
    <property type="evidence" value="ECO:0007669"/>
    <property type="project" value="TreeGrafter"/>
</dbReference>
<dbReference type="CDD" id="cd10027">
    <property type="entry name" value="UDG-F1-like"/>
    <property type="match status" value="1"/>
</dbReference>
<dbReference type="FunFam" id="3.40.470.10:FF:000001">
    <property type="entry name" value="Uracil-DNA glycosylase"/>
    <property type="match status" value="1"/>
</dbReference>
<dbReference type="Gene3D" id="3.40.470.10">
    <property type="entry name" value="Uracil-DNA glycosylase-like domain"/>
    <property type="match status" value="1"/>
</dbReference>
<dbReference type="HAMAP" id="MF_00148">
    <property type="entry name" value="UDG"/>
    <property type="match status" value="1"/>
</dbReference>
<dbReference type="InterPro" id="IPR002043">
    <property type="entry name" value="UDG_fam1"/>
</dbReference>
<dbReference type="InterPro" id="IPR018085">
    <property type="entry name" value="Ura-DNA_Glyclase_AS"/>
</dbReference>
<dbReference type="InterPro" id="IPR005122">
    <property type="entry name" value="Uracil-DNA_glycosylase-like"/>
</dbReference>
<dbReference type="InterPro" id="IPR036895">
    <property type="entry name" value="Uracil-DNA_glycosylase-like_sf"/>
</dbReference>
<dbReference type="NCBIfam" id="NF003588">
    <property type="entry name" value="PRK05254.1-1"/>
    <property type="match status" value="1"/>
</dbReference>
<dbReference type="NCBIfam" id="NF003589">
    <property type="entry name" value="PRK05254.1-2"/>
    <property type="match status" value="1"/>
</dbReference>
<dbReference type="NCBIfam" id="NF003591">
    <property type="entry name" value="PRK05254.1-4"/>
    <property type="match status" value="1"/>
</dbReference>
<dbReference type="NCBIfam" id="NF003592">
    <property type="entry name" value="PRK05254.1-5"/>
    <property type="match status" value="1"/>
</dbReference>
<dbReference type="NCBIfam" id="TIGR00628">
    <property type="entry name" value="ung"/>
    <property type="match status" value="1"/>
</dbReference>
<dbReference type="PANTHER" id="PTHR11264">
    <property type="entry name" value="URACIL-DNA GLYCOSYLASE"/>
    <property type="match status" value="1"/>
</dbReference>
<dbReference type="PANTHER" id="PTHR11264:SF0">
    <property type="entry name" value="URACIL-DNA GLYCOSYLASE"/>
    <property type="match status" value="1"/>
</dbReference>
<dbReference type="Pfam" id="PF03167">
    <property type="entry name" value="UDG"/>
    <property type="match status" value="1"/>
</dbReference>
<dbReference type="SMART" id="SM00986">
    <property type="entry name" value="UDG"/>
    <property type="match status" value="1"/>
</dbReference>
<dbReference type="SMART" id="SM00987">
    <property type="entry name" value="UreE_C"/>
    <property type="match status" value="1"/>
</dbReference>
<dbReference type="SUPFAM" id="SSF52141">
    <property type="entry name" value="Uracil-DNA glycosylase-like"/>
    <property type="match status" value="1"/>
</dbReference>
<dbReference type="PROSITE" id="PS00130">
    <property type="entry name" value="U_DNA_GLYCOSYLASE"/>
    <property type="match status" value="1"/>
</dbReference>
<feature type="chain" id="PRO_1000096588" description="Uracil-DNA glycosylase">
    <location>
        <begin position="1"/>
        <end position="228"/>
    </location>
</feature>
<feature type="active site" description="Proton acceptor" evidence="1">
    <location>
        <position position="65"/>
    </location>
</feature>
<protein>
    <recommendedName>
        <fullName evidence="1">Uracil-DNA glycosylase</fullName>
        <shortName evidence="1">UDG</shortName>
        <ecNumber evidence="1">3.2.2.27</ecNumber>
    </recommendedName>
</protein>
<gene>
    <name evidence="1" type="primary">ung</name>
    <name type="ordered locus">LCABL_11610</name>
</gene>
<sequence>MKTLIHNDWQTVLEPVFESPEYAQLHAFLKEEYATKTIYPEMHHIFQAFEWTPFHDVKVVILGQDPYHNPRQAVGASFAVAPGVALPPSLQNIYKELQSDLGYPPVHHGYLKAWADQGVLLLNAVLTVQAGEAYSHQNHGWEELTDAAIAALSARGGVVFILWGNAAKKKAAVIDTSKNAIIASAHPSPLSASRGFFGSRPFSRTNAALEKMGEAPINWQLPETVKAD</sequence>
<keyword id="KW-0963">Cytoplasm</keyword>
<keyword id="KW-0227">DNA damage</keyword>
<keyword id="KW-0234">DNA repair</keyword>
<keyword id="KW-0378">Hydrolase</keyword>
<reference key="1">
    <citation type="submission" date="2008-06" db="EMBL/GenBank/DDBJ databases">
        <title>Lactobacillus casei BL23 complete genome sequence.</title>
        <authorList>
            <person name="Maze A."/>
            <person name="Boel G."/>
            <person name="Bourand A."/>
            <person name="Loux V."/>
            <person name="Gibrat J.F."/>
            <person name="Zuniga M."/>
            <person name="Hartke A."/>
            <person name="Deutscher J."/>
        </authorList>
    </citation>
    <scope>NUCLEOTIDE SEQUENCE [LARGE SCALE GENOMIC DNA]</scope>
    <source>
        <strain>BL23</strain>
    </source>
</reference>
<accession>B3WCZ5</accession>
<evidence type="ECO:0000255" key="1">
    <source>
        <dbReference type="HAMAP-Rule" id="MF_00148"/>
    </source>
</evidence>
<name>UNG_LACCB</name>
<comment type="function">
    <text evidence="1">Excises uracil residues from the DNA which can arise as a result of misincorporation of dUMP residues by DNA polymerase or due to deamination of cytosine.</text>
</comment>
<comment type="catalytic activity">
    <reaction evidence="1">
        <text>Hydrolyzes single-stranded DNA or mismatched double-stranded DNA and polynucleotides, releasing free uracil.</text>
        <dbReference type="EC" id="3.2.2.27"/>
    </reaction>
</comment>
<comment type="subcellular location">
    <subcellularLocation>
        <location evidence="1">Cytoplasm</location>
    </subcellularLocation>
</comment>
<comment type="similarity">
    <text evidence="1">Belongs to the uracil-DNA glycosylase (UDG) superfamily. UNG family.</text>
</comment>